<feature type="chain" id="PRO_0000416333" description="NAD(P)H-hydrate epimerase">
    <location>
        <begin position="1"/>
        <end position="249"/>
    </location>
</feature>
<feature type="domain" description="YjeF N-terminal" evidence="1">
    <location>
        <begin position="11"/>
        <end position="233"/>
    </location>
</feature>
<feature type="binding site" evidence="1">
    <location>
        <begin position="62"/>
        <end position="66"/>
    </location>
    <ligand>
        <name>(6S)-NADPHX</name>
        <dbReference type="ChEBI" id="CHEBI:64076"/>
    </ligand>
</feature>
<feature type="binding site" evidence="1">
    <location>
        <position position="63"/>
    </location>
    <ligand>
        <name>K(+)</name>
        <dbReference type="ChEBI" id="CHEBI:29103"/>
    </ligand>
</feature>
<feature type="binding site" evidence="1">
    <location>
        <position position="127"/>
    </location>
    <ligand>
        <name>K(+)</name>
        <dbReference type="ChEBI" id="CHEBI:29103"/>
    </ligand>
</feature>
<feature type="binding site" evidence="1">
    <location>
        <begin position="131"/>
        <end position="137"/>
    </location>
    <ligand>
        <name>(6S)-NADPHX</name>
        <dbReference type="ChEBI" id="CHEBI:64076"/>
    </ligand>
</feature>
<feature type="binding site" evidence="1">
    <location>
        <position position="162"/>
    </location>
    <ligand>
        <name>(6S)-NADPHX</name>
        <dbReference type="ChEBI" id="CHEBI:64076"/>
    </ligand>
</feature>
<feature type="binding site" evidence="1">
    <location>
        <position position="165"/>
    </location>
    <ligand>
        <name>K(+)</name>
        <dbReference type="ChEBI" id="CHEBI:29103"/>
    </ligand>
</feature>
<accession>Q5KJ55</accession>
<protein>
    <recommendedName>
        <fullName evidence="1">NAD(P)H-hydrate epimerase</fullName>
        <ecNumber>5.1.99.6</ecNumber>
    </recommendedName>
    <alternativeName>
        <fullName evidence="1">NAD(P)HX epimerase</fullName>
    </alternativeName>
</protein>
<gene>
    <name type="ordered locus">CND00610</name>
</gene>
<keyword id="KW-0963">Cytoplasm</keyword>
<keyword id="KW-0413">Isomerase</keyword>
<keyword id="KW-0479">Metal-binding</keyword>
<keyword id="KW-0496">Mitochondrion</keyword>
<keyword id="KW-0520">NAD</keyword>
<keyword id="KW-0521">NADP</keyword>
<keyword id="KW-0547">Nucleotide-binding</keyword>
<keyword id="KW-0630">Potassium</keyword>
<keyword id="KW-1185">Reference proteome</keyword>
<comment type="function">
    <text evidence="1">Catalyzes the epimerization of the S- and R-forms of NAD(P)HX, a damaged form of NAD(P)H that is a result of enzymatic or heat-dependent hydration. This is a prerequisite for the S-specific NAD(P)H-hydrate dehydratase to allow the repair of both epimers of NAD(P)HX.</text>
</comment>
<comment type="catalytic activity">
    <reaction>
        <text>(6R)-NADHX = (6S)-NADHX</text>
        <dbReference type="Rhea" id="RHEA:32215"/>
        <dbReference type="ChEBI" id="CHEBI:64074"/>
        <dbReference type="ChEBI" id="CHEBI:64075"/>
        <dbReference type="EC" id="5.1.99.6"/>
    </reaction>
</comment>
<comment type="catalytic activity">
    <reaction>
        <text>(6R)-NADPHX = (6S)-NADPHX</text>
        <dbReference type="Rhea" id="RHEA:32227"/>
        <dbReference type="ChEBI" id="CHEBI:64076"/>
        <dbReference type="ChEBI" id="CHEBI:64077"/>
        <dbReference type="EC" id="5.1.99.6"/>
    </reaction>
</comment>
<comment type="cofactor">
    <cofactor evidence="1">
        <name>K(+)</name>
        <dbReference type="ChEBI" id="CHEBI:29103"/>
    </cofactor>
    <text evidence="1">Binds 1 potassium ion per subunit.</text>
</comment>
<comment type="subcellular location">
    <subcellularLocation>
        <location evidence="1">Cytoplasm</location>
    </subcellularLocation>
    <subcellularLocation>
        <location evidence="1">Mitochondrion</location>
    </subcellularLocation>
</comment>
<comment type="similarity">
    <text evidence="1">Belongs to the NnrE/AIBP family.</text>
</comment>
<dbReference type="EC" id="5.1.99.6"/>
<dbReference type="EMBL" id="AE017344">
    <property type="protein sequence ID" value="AAW43000.1"/>
    <property type="molecule type" value="Genomic_DNA"/>
</dbReference>
<dbReference type="RefSeq" id="XP_570307.1">
    <property type="nucleotide sequence ID" value="XM_570307.2"/>
</dbReference>
<dbReference type="SMR" id="Q5KJ55"/>
<dbReference type="FunCoup" id="Q5KJ55">
    <property type="interactions" value="38"/>
</dbReference>
<dbReference type="STRING" id="214684.Q5KJ55"/>
<dbReference type="PaxDb" id="214684-Q5KJ55"/>
<dbReference type="EnsemblFungi" id="AAW43000">
    <property type="protein sequence ID" value="AAW43000"/>
    <property type="gene ID" value="CND00610"/>
</dbReference>
<dbReference type="GeneID" id="3257221"/>
<dbReference type="KEGG" id="cne:CND00610"/>
<dbReference type="VEuPathDB" id="FungiDB:CND00610"/>
<dbReference type="eggNOG" id="KOG2585">
    <property type="taxonomic scope" value="Eukaryota"/>
</dbReference>
<dbReference type="HOGENOM" id="CLU_024853_3_0_1"/>
<dbReference type="InParanoid" id="Q5KJ55"/>
<dbReference type="OMA" id="RHLFHYG"/>
<dbReference type="OrthoDB" id="10064708at2759"/>
<dbReference type="Proteomes" id="UP000002149">
    <property type="component" value="Chromosome 4"/>
</dbReference>
<dbReference type="GO" id="GO:0005739">
    <property type="term" value="C:mitochondrion"/>
    <property type="evidence" value="ECO:0000318"/>
    <property type="project" value="GO_Central"/>
</dbReference>
<dbReference type="GO" id="GO:0046872">
    <property type="term" value="F:metal ion binding"/>
    <property type="evidence" value="ECO:0007669"/>
    <property type="project" value="UniProtKB-KW"/>
</dbReference>
<dbReference type="GO" id="GO:0052856">
    <property type="term" value="F:NAD(P)HX epimerase activity"/>
    <property type="evidence" value="ECO:0000318"/>
    <property type="project" value="GO_Central"/>
</dbReference>
<dbReference type="GO" id="GO:0000166">
    <property type="term" value="F:nucleotide binding"/>
    <property type="evidence" value="ECO:0007669"/>
    <property type="project" value="UniProtKB-KW"/>
</dbReference>
<dbReference type="FunFam" id="3.40.50.10260:FF:000005">
    <property type="entry name" value="NAD(P)H-hydrate epimerase"/>
    <property type="match status" value="1"/>
</dbReference>
<dbReference type="Gene3D" id="3.40.50.10260">
    <property type="entry name" value="YjeF N-terminal domain"/>
    <property type="match status" value="1"/>
</dbReference>
<dbReference type="HAMAP" id="MF_01966">
    <property type="entry name" value="NADHX_epimerase"/>
    <property type="match status" value="1"/>
</dbReference>
<dbReference type="InterPro" id="IPR004443">
    <property type="entry name" value="YjeF_N_dom"/>
</dbReference>
<dbReference type="InterPro" id="IPR036652">
    <property type="entry name" value="YjeF_N_dom_sf"/>
</dbReference>
<dbReference type="InterPro" id="IPR032976">
    <property type="entry name" value="YJEFN_prot_NAXE-like"/>
</dbReference>
<dbReference type="NCBIfam" id="TIGR00197">
    <property type="entry name" value="yjeF_nterm"/>
    <property type="match status" value="1"/>
</dbReference>
<dbReference type="PANTHER" id="PTHR13232">
    <property type="entry name" value="NAD(P)H-HYDRATE EPIMERASE"/>
    <property type="match status" value="1"/>
</dbReference>
<dbReference type="PANTHER" id="PTHR13232:SF10">
    <property type="entry name" value="NAD(P)H-HYDRATE EPIMERASE"/>
    <property type="match status" value="1"/>
</dbReference>
<dbReference type="Pfam" id="PF03853">
    <property type="entry name" value="YjeF_N"/>
    <property type="match status" value="1"/>
</dbReference>
<dbReference type="SUPFAM" id="SSF64153">
    <property type="entry name" value="YjeF N-terminal domain-like"/>
    <property type="match status" value="1"/>
</dbReference>
<dbReference type="PROSITE" id="PS51385">
    <property type="entry name" value="YJEF_N"/>
    <property type="match status" value="1"/>
</dbReference>
<evidence type="ECO:0000255" key="1">
    <source>
        <dbReference type="HAMAP-Rule" id="MF_03159"/>
    </source>
</evidence>
<organism>
    <name type="scientific">Cryptococcus neoformans var. neoformans serotype D (strain JEC21 / ATCC MYA-565)</name>
    <name type="common">Filobasidiella neoformans</name>
    <dbReference type="NCBI Taxonomy" id="214684"/>
    <lineage>
        <taxon>Eukaryota</taxon>
        <taxon>Fungi</taxon>
        <taxon>Dikarya</taxon>
        <taxon>Basidiomycota</taxon>
        <taxon>Agaricomycotina</taxon>
        <taxon>Tremellomycetes</taxon>
        <taxon>Tremellales</taxon>
        <taxon>Cryptococcaceae</taxon>
        <taxon>Cryptococcus</taxon>
        <taxon>Cryptococcus neoformans species complex</taxon>
    </lineage>
</organism>
<name>NNRE_CRYNJ</name>
<sequence length="249" mass="27474">MPIRYISQKLAQQIDVELMSASGAFSLDQLMELAGLSCAQALAKSFPPTKHKHVMVACGPGNQGGDGLVAARHLHHFSYTPTVYLPKPSSKDFLQRLVKQCENLNIPILKDVDAFQTELAKSDVILDAIFGFSFQPPLRKPFDQVLKAIKGVSKKIPIVSVDIPSGWSVTDGPQPLWTEEDDKGGKEMIETFEPEVLVSLTAPKEGVKAFKGQHWLGGRFVPDELGKKHELNIPPYEGIDQVVELPRNH</sequence>
<reference key="1">
    <citation type="journal article" date="2005" name="Science">
        <title>The genome of the basidiomycetous yeast and human pathogen Cryptococcus neoformans.</title>
        <authorList>
            <person name="Loftus B.J."/>
            <person name="Fung E."/>
            <person name="Roncaglia P."/>
            <person name="Rowley D."/>
            <person name="Amedeo P."/>
            <person name="Bruno D."/>
            <person name="Vamathevan J."/>
            <person name="Miranda M."/>
            <person name="Anderson I.J."/>
            <person name="Fraser J.A."/>
            <person name="Allen J.E."/>
            <person name="Bosdet I.E."/>
            <person name="Brent M.R."/>
            <person name="Chiu R."/>
            <person name="Doering T.L."/>
            <person name="Donlin M.J."/>
            <person name="D'Souza C.A."/>
            <person name="Fox D.S."/>
            <person name="Grinberg V."/>
            <person name="Fu J."/>
            <person name="Fukushima M."/>
            <person name="Haas B.J."/>
            <person name="Huang J.C."/>
            <person name="Janbon G."/>
            <person name="Jones S.J.M."/>
            <person name="Koo H.L."/>
            <person name="Krzywinski M.I."/>
            <person name="Kwon-Chung K.J."/>
            <person name="Lengeler K.B."/>
            <person name="Maiti R."/>
            <person name="Marra M.A."/>
            <person name="Marra R.E."/>
            <person name="Mathewson C.A."/>
            <person name="Mitchell T.G."/>
            <person name="Pertea M."/>
            <person name="Riggs F.R."/>
            <person name="Salzberg S.L."/>
            <person name="Schein J.E."/>
            <person name="Shvartsbeyn A."/>
            <person name="Shin H."/>
            <person name="Shumway M."/>
            <person name="Specht C.A."/>
            <person name="Suh B.B."/>
            <person name="Tenney A."/>
            <person name="Utterback T.R."/>
            <person name="Wickes B.L."/>
            <person name="Wortman J.R."/>
            <person name="Wye N.H."/>
            <person name="Kronstad J.W."/>
            <person name="Lodge J.K."/>
            <person name="Heitman J."/>
            <person name="Davis R.W."/>
            <person name="Fraser C.M."/>
            <person name="Hyman R.W."/>
        </authorList>
    </citation>
    <scope>NUCLEOTIDE SEQUENCE [LARGE SCALE GENOMIC DNA]</scope>
    <source>
        <strain>JEC21 / ATCC MYA-565</strain>
    </source>
</reference>
<proteinExistence type="inferred from homology"/>